<accession>Q8G6E0</accession>
<evidence type="ECO:0000255" key="1">
    <source>
        <dbReference type="HAMAP-Rule" id="MF_00203"/>
    </source>
</evidence>
<evidence type="ECO:0000256" key="2">
    <source>
        <dbReference type="SAM" id="MobiDB-lite"/>
    </source>
</evidence>
<evidence type="ECO:0000305" key="3"/>
<feature type="chain" id="PRO_0000264869" description="UvrABC system protein C">
    <location>
        <begin position="1"/>
        <end position="746"/>
    </location>
</feature>
<feature type="domain" description="GIY-YIG" evidence="1">
    <location>
        <begin position="18"/>
        <end position="97"/>
    </location>
</feature>
<feature type="domain" description="UVR" evidence="1">
    <location>
        <begin position="211"/>
        <end position="246"/>
    </location>
</feature>
<feature type="region of interest" description="Disordered" evidence="2">
    <location>
        <begin position="557"/>
        <end position="577"/>
    </location>
</feature>
<protein>
    <recommendedName>
        <fullName evidence="1">UvrABC system protein C</fullName>
        <shortName evidence="1">Protein UvrC</shortName>
    </recommendedName>
    <alternativeName>
        <fullName evidence="1">Excinuclease ABC subunit C</fullName>
    </alternativeName>
</protein>
<keyword id="KW-0963">Cytoplasm</keyword>
<keyword id="KW-0227">DNA damage</keyword>
<keyword id="KW-0228">DNA excision</keyword>
<keyword id="KW-0234">DNA repair</keyword>
<keyword id="KW-0267">Excision nuclease</keyword>
<keyword id="KW-1185">Reference proteome</keyword>
<keyword id="KW-0742">SOS response</keyword>
<proteinExistence type="inferred from homology"/>
<reference key="1">
    <citation type="journal article" date="2002" name="Proc. Natl. Acad. Sci. U.S.A.">
        <title>The genome sequence of Bifidobacterium longum reflects its adaptation to the human gastrointestinal tract.</title>
        <authorList>
            <person name="Schell M.A."/>
            <person name="Karmirantzou M."/>
            <person name="Snel B."/>
            <person name="Vilanova D."/>
            <person name="Berger B."/>
            <person name="Pessi G."/>
            <person name="Zwahlen M.-C."/>
            <person name="Desiere F."/>
            <person name="Bork P."/>
            <person name="Delley M."/>
            <person name="Pridmore R.D."/>
            <person name="Arigoni F."/>
        </authorList>
    </citation>
    <scope>NUCLEOTIDE SEQUENCE [LARGE SCALE GENOMIC DNA]</scope>
    <source>
        <strain>NCC 2705</strain>
    </source>
</reference>
<sequence length="746" mass="83182">MLGDSRDLFRPKTSDIPAKPGVYKWRDGEGRVIYVGKAKNLRNRLTNYFQPLYLLHPRTQTMVLTARSLEWTVVATELESLTLEYTWIKEFDPRFNVQFRDDKTYPYLAVSTGERIPRVWVTRSRKRRDTRYFGPYAKVWELRHSLDRLLRTFPVRTCTTNVFHKAQLTGRPCLFASIGKCSAPCVNRIEADEHRRLCEQLVGVMTGRLGRPYIAQLTRDMKEASAELEFEKAARLRDQIQMLETVVQQNAVVFDQDVDADVFGFASDELEASVHAFYVRAGSIRGERNWSVERVEDIDDADLMADLLVQVYSDAAGDNHPQSAATISTNREAIGSTQTITATDAVARAQATRERNTRQETTGRADLLAPIAPVPREIIVPVEPARREELEGWLTNLRGGAVTIRVASRGDKKQLMDRANENASQALQRSKMSRISDMGARTQAMNDVAKALGLAEAPLRIECYDISNTVGGAFQVASMVVFEDAIAKKSEYRRFAIRGKDGKGAVDDLSALYETLTRRFKHGNIAGDSGESIDAEQRVASAAGKMTTAVAAETIAANGNDNGEGGSDISGKGHAVPVGVQNDARESPPDIVQQNTNRHHFAYKPNLVVVDGGKPQVMAAAKALEDCGVNDVAVCGLAKRLEEVWVPDDDYPIILKRQSEGMYLLQRVRDESHRFAITYHRQQRRKGALRSALDEIPGIGESYQKRLLNHFGSVKAMREASVEDFEKVKGIGHAKAEALYNALHEQ</sequence>
<dbReference type="EMBL" id="AE014295">
    <property type="protein sequence ID" value="AAN24522.1"/>
    <property type="status" value="ALT_INIT"/>
    <property type="molecule type" value="Genomic_DNA"/>
</dbReference>
<dbReference type="RefSeq" id="NP_695886.1">
    <property type="nucleotide sequence ID" value="NC_004307.2"/>
</dbReference>
<dbReference type="SMR" id="Q8G6E0"/>
<dbReference type="STRING" id="206672.BL0703"/>
<dbReference type="EnsemblBacteria" id="AAN24522">
    <property type="protein sequence ID" value="AAN24522"/>
    <property type="gene ID" value="BL0703"/>
</dbReference>
<dbReference type="KEGG" id="blo:BL0703"/>
<dbReference type="PATRIC" id="fig|206672.9.peg.402"/>
<dbReference type="HOGENOM" id="CLU_014841_2_0_11"/>
<dbReference type="OrthoDB" id="9804933at2"/>
<dbReference type="Proteomes" id="UP000000439">
    <property type="component" value="Chromosome"/>
</dbReference>
<dbReference type="GO" id="GO:0005737">
    <property type="term" value="C:cytoplasm"/>
    <property type="evidence" value="ECO:0007669"/>
    <property type="project" value="UniProtKB-SubCell"/>
</dbReference>
<dbReference type="GO" id="GO:0009380">
    <property type="term" value="C:excinuclease repair complex"/>
    <property type="evidence" value="ECO:0007669"/>
    <property type="project" value="InterPro"/>
</dbReference>
<dbReference type="GO" id="GO:0003677">
    <property type="term" value="F:DNA binding"/>
    <property type="evidence" value="ECO:0007669"/>
    <property type="project" value="UniProtKB-UniRule"/>
</dbReference>
<dbReference type="GO" id="GO:0009381">
    <property type="term" value="F:excinuclease ABC activity"/>
    <property type="evidence" value="ECO:0007669"/>
    <property type="project" value="UniProtKB-UniRule"/>
</dbReference>
<dbReference type="GO" id="GO:0006289">
    <property type="term" value="P:nucleotide-excision repair"/>
    <property type="evidence" value="ECO:0007669"/>
    <property type="project" value="UniProtKB-UniRule"/>
</dbReference>
<dbReference type="GO" id="GO:0009432">
    <property type="term" value="P:SOS response"/>
    <property type="evidence" value="ECO:0007669"/>
    <property type="project" value="UniProtKB-UniRule"/>
</dbReference>
<dbReference type="CDD" id="cd10434">
    <property type="entry name" value="GIY-YIG_UvrC_Cho"/>
    <property type="match status" value="1"/>
</dbReference>
<dbReference type="FunFam" id="3.40.1440.10:FF:000001">
    <property type="entry name" value="UvrABC system protein C"/>
    <property type="match status" value="1"/>
</dbReference>
<dbReference type="Gene3D" id="1.10.150.20">
    <property type="entry name" value="5' to 3' exonuclease, C-terminal subdomain"/>
    <property type="match status" value="1"/>
</dbReference>
<dbReference type="Gene3D" id="3.40.1440.10">
    <property type="entry name" value="GIY-YIG endonuclease"/>
    <property type="match status" value="1"/>
</dbReference>
<dbReference type="Gene3D" id="4.10.860.10">
    <property type="entry name" value="UVR domain"/>
    <property type="match status" value="1"/>
</dbReference>
<dbReference type="Gene3D" id="3.30.420.340">
    <property type="entry name" value="UvrC, RNAse H endonuclease domain"/>
    <property type="match status" value="1"/>
</dbReference>
<dbReference type="HAMAP" id="MF_00203">
    <property type="entry name" value="UvrC"/>
    <property type="match status" value="1"/>
</dbReference>
<dbReference type="InterPro" id="IPR000305">
    <property type="entry name" value="GIY-YIG_endonuc"/>
</dbReference>
<dbReference type="InterPro" id="IPR035901">
    <property type="entry name" value="GIY-YIG_endonuc_sf"/>
</dbReference>
<dbReference type="InterPro" id="IPR047296">
    <property type="entry name" value="GIY-YIG_UvrC_Cho"/>
</dbReference>
<dbReference type="InterPro" id="IPR003583">
    <property type="entry name" value="Hlx-hairpin-Hlx_DNA-bd_motif"/>
</dbReference>
<dbReference type="InterPro" id="IPR010994">
    <property type="entry name" value="RuvA_2-like"/>
</dbReference>
<dbReference type="InterPro" id="IPR001943">
    <property type="entry name" value="UVR_dom"/>
</dbReference>
<dbReference type="InterPro" id="IPR036876">
    <property type="entry name" value="UVR_dom_sf"/>
</dbReference>
<dbReference type="InterPro" id="IPR050066">
    <property type="entry name" value="UvrABC_protein_C"/>
</dbReference>
<dbReference type="InterPro" id="IPR004791">
    <property type="entry name" value="UvrC"/>
</dbReference>
<dbReference type="InterPro" id="IPR001162">
    <property type="entry name" value="UvrC_RNase_H_dom"/>
</dbReference>
<dbReference type="InterPro" id="IPR038476">
    <property type="entry name" value="UvrC_RNase_H_dom_sf"/>
</dbReference>
<dbReference type="NCBIfam" id="NF001824">
    <property type="entry name" value="PRK00558.1-5"/>
    <property type="match status" value="1"/>
</dbReference>
<dbReference type="PANTHER" id="PTHR30562:SF1">
    <property type="entry name" value="UVRABC SYSTEM PROTEIN C"/>
    <property type="match status" value="1"/>
</dbReference>
<dbReference type="PANTHER" id="PTHR30562">
    <property type="entry name" value="UVRC/OXIDOREDUCTASE"/>
    <property type="match status" value="1"/>
</dbReference>
<dbReference type="Pfam" id="PF01541">
    <property type="entry name" value="GIY-YIG"/>
    <property type="match status" value="1"/>
</dbReference>
<dbReference type="Pfam" id="PF14520">
    <property type="entry name" value="HHH_5"/>
    <property type="match status" value="1"/>
</dbReference>
<dbReference type="Pfam" id="PF02151">
    <property type="entry name" value="UVR"/>
    <property type="match status" value="1"/>
</dbReference>
<dbReference type="Pfam" id="PF22920">
    <property type="entry name" value="UvrC_RNaseH"/>
    <property type="match status" value="2"/>
</dbReference>
<dbReference type="Pfam" id="PF08459">
    <property type="entry name" value="UvrC_RNaseH_dom"/>
    <property type="match status" value="1"/>
</dbReference>
<dbReference type="SMART" id="SM00465">
    <property type="entry name" value="GIYc"/>
    <property type="match status" value="1"/>
</dbReference>
<dbReference type="SMART" id="SM00278">
    <property type="entry name" value="HhH1"/>
    <property type="match status" value="2"/>
</dbReference>
<dbReference type="SUPFAM" id="SSF46600">
    <property type="entry name" value="C-terminal UvrC-binding domain of UvrB"/>
    <property type="match status" value="1"/>
</dbReference>
<dbReference type="SUPFAM" id="SSF82771">
    <property type="entry name" value="GIY-YIG endonuclease"/>
    <property type="match status" value="1"/>
</dbReference>
<dbReference type="SUPFAM" id="SSF47781">
    <property type="entry name" value="RuvA domain 2-like"/>
    <property type="match status" value="1"/>
</dbReference>
<dbReference type="PROSITE" id="PS50164">
    <property type="entry name" value="GIY_YIG"/>
    <property type="match status" value="1"/>
</dbReference>
<dbReference type="PROSITE" id="PS50151">
    <property type="entry name" value="UVR"/>
    <property type="match status" value="1"/>
</dbReference>
<dbReference type="PROSITE" id="PS50165">
    <property type="entry name" value="UVRC"/>
    <property type="match status" value="1"/>
</dbReference>
<comment type="function">
    <text evidence="1">The UvrABC repair system catalyzes the recognition and processing of DNA lesions. UvrC both incises the 5' and 3' sides of the lesion. The N-terminal half is responsible for the 3' incision and the C-terminal half is responsible for the 5' incision.</text>
</comment>
<comment type="subunit">
    <text evidence="1">Interacts with UvrB in an incision complex.</text>
</comment>
<comment type="subcellular location">
    <subcellularLocation>
        <location evidence="1">Cytoplasm</location>
    </subcellularLocation>
</comment>
<comment type="similarity">
    <text evidence="1">Belongs to the UvrC family.</text>
</comment>
<comment type="sequence caution" evidence="3">
    <conflict type="erroneous initiation">
        <sequence resource="EMBL-CDS" id="AAN24522"/>
    </conflict>
</comment>
<name>UVRC_BIFLO</name>
<organism>
    <name type="scientific">Bifidobacterium longum (strain NCC 2705)</name>
    <dbReference type="NCBI Taxonomy" id="206672"/>
    <lineage>
        <taxon>Bacteria</taxon>
        <taxon>Bacillati</taxon>
        <taxon>Actinomycetota</taxon>
        <taxon>Actinomycetes</taxon>
        <taxon>Bifidobacteriales</taxon>
        <taxon>Bifidobacteriaceae</taxon>
        <taxon>Bifidobacterium</taxon>
    </lineage>
</organism>
<gene>
    <name evidence="1" type="primary">uvrC</name>
    <name type="ordered locus">BL0703</name>
</gene>